<name>DHYS_PYRCJ</name>
<organism>
    <name type="scientific">Pyrobaculum calidifontis (strain DSM 21063 / JCM 11548 / VA1)</name>
    <dbReference type="NCBI Taxonomy" id="410359"/>
    <lineage>
        <taxon>Archaea</taxon>
        <taxon>Thermoproteota</taxon>
        <taxon>Thermoprotei</taxon>
        <taxon>Thermoproteales</taxon>
        <taxon>Thermoproteaceae</taxon>
        <taxon>Pyrobaculum</taxon>
    </lineage>
</organism>
<dbReference type="EC" id="2.5.1.46" evidence="1"/>
<dbReference type="EMBL" id="CP000561">
    <property type="protein sequence ID" value="ABO08596.1"/>
    <property type="molecule type" value="Genomic_DNA"/>
</dbReference>
<dbReference type="RefSeq" id="WP_011849854.1">
    <property type="nucleotide sequence ID" value="NC_009073.1"/>
</dbReference>
<dbReference type="SMR" id="A3MVC9"/>
<dbReference type="STRING" id="410359.Pcal_1171"/>
<dbReference type="GeneID" id="4909189"/>
<dbReference type="KEGG" id="pcl:Pcal_1171"/>
<dbReference type="eggNOG" id="arCOG04142">
    <property type="taxonomic scope" value="Archaea"/>
</dbReference>
<dbReference type="HOGENOM" id="CLU_039781_1_0_2"/>
<dbReference type="OrthoDB" id="17730at2157"/>
<dbReference type="UniPathway" id="UPA00354"/>
<dbReference type="Proteomes" id="UP000001431">
    <property type="component" value="Chromosome"/>
</dbReference>
<dbReference type="GO" id="GO:0005737">
    <property type="term" value="C:cytoplasm"/>
    <property type="evidence" value="ECO:0007669"/>
    <property type="project" value="TreeGrafter"/>
</dbReference>
<dbReference type="GO" id="GO:0034038">
    <property type="term" value="F:deoxyhypusine synthase activity"/>
    <property type="evidence" value="ECO:0007669"/>
    <property type="project" value="UniProtKB-UniRule"/>
</dbReference>
<dbReference type="FunFam" id="3.40.910.10:FF:000010">
    <property type="entry name" value="Deoxyhypusine synthase"/>
    <property type="match status" value="1"/>
</dbReference>
<dbReference type="Gene3D" id="3.40.910.10">
    <property type="entry name" value="Deoxyhypusine synthase"/>
    <property type="match status" value="1"/>
</dbReference>
<dbReference type="HAMAP" id="MF_00153">
    <property type="entry name" value="DHS"/>
    <property type="match status" value="1"/>
</dbReference>
<dbReference type="InterPro" id="IPR022899">
    <property type="entry name" value="Deoxyhypus_synthase_arc"/>
</dbReference>
<dbReference type="InterPro" id="IPR002773">
    <property type="entry name" value="Deoxyhypusine_synthase"/>
</dbReference>
<dbReference type="InterPro" id="IPR036982">
    <property type="entry name" value="Deoxyhypusine_synthase_sf"/>
</dbReference>
<dbReference type="InterPro" id="IPR029035">
    <property type="entry name" value="DHS-like_NAD/FAD-binding_dom"/>
</dbReference>
<dbReference type="NCBIfam" id="NF002294">
    <property type="entry name" value="PRK01221.1"/>
    <property type="match status" value="1"/>
</dbReference>
<dbReference type="PANTHER" id="PTHR11703">
    <property type="entry name" value="DEOXYHYPUSINE SYNTHASE"/>
    <property type="match status" value="1"/>
</dbReference>
<dbReference type="PANTHER" id="PTHR11703:SF0">
    <property type="entry name" value="DEOXYHYPUSINE SYNTHASE"/>
    <property type="match status" value="1"/>
</dbReference>
<dbReference type="Pfam" id="PF01916">
    <property type="entry name" value="DS"/>
    <property type="match status" value="1"/>
</dbReference>
<dbReference type="SUPFAM" id="SSF52467">
    <property type="entry name" value="DHS-like NAD/FAD-binding domain"/>
    <property type="match status" value="1"/>
</dbReference>
<accession>A3MVC9</accession>
<keyword id="KW-0386">Hypusine biosynthesis</keyword>
<keyword id="KW-0520">NAD</keyword>
<keyword id="KW-0808">Transferase</keyword>
<reference key="1">
    <citation type="submission" date="2007-02" db="EMBL/GenBank/DDBJ databases">
        <title>Complete sequence of Pyrobaculum calidifontis JCM 11548.</title>
        <authorList>
            <consortium name="US DOE Joint Genome Institute"/>
            <person name="Copeland A."/>
            <person name="Lucas S."/>
            <person name="Lapidus A."/>
            <person name="Barry K."/>
            <person name="Glavina del Rio T."/>
            <person name="Dalin E."/>
            <person name="Tice H."/>
            <person name="Pitluck S."/>
            <person name="Chain P."/>
            <person name="Malfatti S."/>
            <person name="Shin M."/>
            <person name="Vergez L."/>
            <person name="Schmutz J."/>
            <person name="Larimer F."/>
            <person name="Land M."/>
            <person name="Hauser L."/>
            <person name="Kyrpides N."/>
            <person name="Mikhailova N."/>
            <person name="Cozen A.E."/>
            <person name="Fitz-Gibbon S.T."/>
            <person name="House C.H."/>
            <person name="Saltikov C."/>
            <person name="Lowe T.M."/>
            <person name="Richardson P."/>
        </authorList>
    </citation>
    <scope>NUCLEOTIDE SEQUENCE [LARGE SCALE GENOMIC DNA]</scope>
    <source>
        <strain>DSM 21063 / JCM 11548 / VA1</strain>
    </source>
</reference>
<feature type="chain" id="PRO_1000011353" description="Probable deoxyhypusine synthase">
    <location>
        <begin position="1"/>
        <end position="295"/>
    </location>
</feature>
<feature type="active site" description="Nucleophile" evidence="1">
    <location>
        <position position="267"/>
    </location>
</feature>
<protein>
    <recommendedName>
        <fullName evidence="1">Probable deoxyhypusine synthase</fullName>
        <shortName evidence="1">DHS</shortName>
        <ecNumber evidence="1">2.5.1.46</ecNumber>
    </recommendedName>
</protein>
<sequence length="295" mass="32193">MREVVELYKRIGGFQALHVAQAYEVLKEALGEADVRFFSFTGNLVATGLREIIAEALRERLFNVVVTTAGALDHDIAKAMGASYRPGSFDLDDYELAEKGLHRLGNVVISREEYGPYVEKFVLQRCERLWGRSLATYELAEEFGRDLPEDSILGAAARAGVKVFVPGIVDGAVGTALLTCNDLARVRRGGARLVVDVLKDEEALREIVHGGKRLAALIVGGGISKHHVIWWAQFKGGLDYVVYISTAVEYDGSLSGARPREAVSWGKVKPTAKSVYVYADATLVLPILLKALCGK</sequence>
<comment type="function">
    <text evidence="1">Catalyzes the NAD-dependent oxidative cleavage of spermidine and the subsequent transfer of the butylamine moiety of spermidine to the epsilon-amino group of a specific lysine residue of the eIF-5A precursor protein to form the intermediate deoxyhypusine residue.</text>
</comment>
<comment type="catalytic activity">
    <reaction evidence="1">
        <text>[eIF5A protein]-L-lysine + spermidine = [eIF5A protein]-deoxyhypusine + propane-1,3-diamine</text>
        <dbReference type="Rhea" id="RHEA:33299"/>
        <dbReference type="Rhea" id="RHEA-COMP:10143"/>
        <dbReference type="Rhea" id="RHEA-COMP:10144"/>
        <dbReference type="ChEBI" id="CHEBI:29969"/>
        <dbReference type="ChEBI" id="CHEBI:57484"/>
        <dbReference type="ChEBI" id="CHEBI:57834"/>
        <dbReference type="ChEBI" id="CHEBI:82657"/>
        <dbReference type="EC" id="2.5.1.46"/>
    </reaction>
</comment>
<comment type="cofactor">
    <cofactor evidence="1">
        <name>NAD(+)</name>
        <dbReference type="ChEBI" id="CHEBI:57540"/>
    </cofactor>
</comment>
<comment type="pathway">
    <text evidence="1">Protein modification; eIF5A hypusination.</text>
</comment>
<comment type="similarity">
    <text evidence="1">Belongs to the deoxyhypusine synthase family.</text>
</comment>
<gene>
    <name evidence="1" type="primary">dys</name>
    <name type="ordered locus">Pcal_1171</name>
</gene>
<evidence type="ECO:0000255" key="1">
    <source>
        <dbReference type="HAMAP-Rule" id="MF_00153"/>
    </source>
</evidence>
<proteinExistence type="inferred from homology"/>